<reference key="1">
    <citation type="journal article" date="2000" name="Proc. Natl. Acad. Sci. U.S.A.">
        <title>Archaeal adaptation to higher temperatures revealed by genomic sequence of Thermoplasma volcanium.</title>
        <authorList>
            <person name="Kawashima T."/>
            <person name="Amano N."/>
            <person name="Koike H."/>
            <person name="Makino S."/>
            <person name="Higuchi S."/>
            <person name="Kawashima-Ohya Y."/>
            <person name="Watanabe K."/>
            <person name="Yamazaki M."/>
            <person name="Kanehori K."/>
            <person name="Kawamoto T."/>
            <person name="Nunoshiba T."/>
            <person name="Yamamoto Y."/>
            <person name="Aramaki H."/>
            <person name="Makino K."/>
            <person name="Suzuki M."/>
        </authorList>
    </citation>
    <scope>NUCLEOTIDE SEQUENCE [LARGE SCALE GENOMIC DNA]</scope>
    <source>
        <strain>ATCC 51530 / DSM 4299 / JCM 9571 / NBRC 15438 / GSS1</strain>
    </source>
</reference>
<name>QUEC_THEVO</name>
<feature type="chain" id="PRO_0000246994" description="7-cyano-7-deazaguanine synthase">
    <location>
        <begin position="1"/>
        <end position="241"/>
    </location>
</feature>
<feature type="binding site" evidence="1">
    <location>
        <begin position="9"/>
        <end position="19"/>
    </location>
    <ligand>
        <name>ATP</name>
        <dbReference type="ChEBI" id="CHEBI:30616"/>
    </ligand>
</feature>
<feature type="binding site" evidence="1">
    <location>
        <position position="189"/>
    </location>
    <ligand>
        <name>Zn(2+)</name>
        <dbReference type="ChEBI" id="CHEBI:29105"/>
    </ligand>
</feature>
<feature type="binding site" evidence="1">
    <location>
        <position position="197"/>
    </location>
    <ligand>
        <name>Zn(2+)</name>
        <dbReference type="ChEBI" id="CHEBI:29105"/>
    </ligand>
</feature>
<feature type="binding site" evidence="1">
    <location>
        <position position="200"/>
    </location>
    <ligand>
        <name>Zn(2+)</name>
        <dbReference type="ChEBI" id="CHEBI:29105"/>
    </ligand>
</feature>
<feature type="binding site" evidence="1">
    <location>
        <position position="203"/>
    </location>
    <ligand>
        <name>Zn(2+)</name>
        <dbReference type="ChEBI" id="CHEBI:29105"/>
    </ligand>
</feature>
<proteinExistence type="inferred from homology"/>
<protein>
    <recommendedName>
        <fullName evidence="1">7-cyano-7-deazaguanine synthase</fullName>
        <ecNumber evidence="1">6.3.4.20</ecNumber>
    </recommendedName>
    <alternativeName>
        <fullName evidence="1">7-cyano-7-carbaguanine synthase</fullName>
    </alternativeName>
    <alternativeName>
        <fullName evidence="1">Archaeosine biosynthesis protein QueC</fullName>
    </alternativeName>
    <alternativeName>
        <fullName evidence="1">PreQ(0) synthase</fullName>
    </alternativeName>
</protein>
<accession>Q979P0</accession>
<comment type="function">
    <text evidence="1">Catalyzes the ATP-dependent conversion of 7-carboxy-7-deazaguanine (CDG) to 7-cyano-7-deazaguanine (preQ(0)).</text>
</comment>
<comment type="catalytic activity">
    <reaction evidence="1">
        <text>7-carboxy-7-deazaguanine + NH4(+) + ATP = 7-cyano-7-deazaguanine + ADP + phosphate + H2O + H(+)</text>
        <dbReference type="Rhea" id="RHEA:27982"/>
        <dbReference type="ChEBI" id="CHEBI:15377"/>
        <dbReference type="ChEBI" id="CHEBI:15378"/>
        <dbReference type="ChEBI" id="CHEBI:28938"/>
        <dbReference type="ChEBI" id="CHEBI:30616"/>
        <dbReference type="ChEBI" id="CHEBI:43474"/>
        <dbReference type="ChEBI" id="CHEBI:45075"/>
        <dbReference type="ChEBI" id="CHEBI:61036"/>
        <dbReference type="ChEBI" id="CHEBI:456216"/>
        <dbReference type="EC" id="6.3.4.20"/>
    </reaction>
</comment>
<comment type="cofactor">
    <cofactor evidence="1">
        <name>Zn(2+)</name>
        <dbReference type="ChEBI" id="CHEBI:29105"/>
    </cofactor>
    <text evidence="1">Binds 1 zinc ion per subunit.</text>
</comment>
<comment type="pathway">
    <text evidence="1">Purine metabolism; 7-cyano-7-deazaguanine biosynthesis.</text>
</comment>
<comment type="similarity">
    <text evidence="1">Belongs to the QueC family.</text>
</comment>
<gene>
    <name evidence="1" type="primary">queC</name>
    <name type="ordered locus">TV1120</name>
    <name type="ORF">TVG1151458</name>
</gene>
<dbReference type="EC" id="6.3.4.20" evidence="1"/>
<dbReference type="EMBL" id="BA000011">
    <property type="protein sequence ID" value="BAB60262.1"/>
    <property type="molecule type" value="Genomic_DNA"/>
</dbReference>
<dbReference type="RefSeq" id="WP_010917354.1">
    <property type="nucleotide sequence ID" value="NC_002689.2"/>
</dbReference>
<dbReference type="SMR" id="Q979P0"/>
<dbReference type="STRING" id="273116.gene:9381919"/>
<dbReference type="PaxDb" id="273116-14325358"/>
<dbReference type="GeneID" id="1441236"/>
<dbReference type="KEGG" id="tvo:TVG1151458"/>
<dbReference type="eggNOG" id="arCOG00039">
    <property type="taxonomic scope" value="Archaea"/>
</dbReference>
<dbReference type="HOGENOM" id="CLU_081854_1_0_2"/>
<dbReference type="OrthoDB" id="6532at2157"/>
<dbReference type="PhylomeDB" id="Q979P0"/>
<dbReference type="UniPathway" id="UPA00391"/>
<dbReference type="Proteomes" id="UP000001017">
    <property type="component" value="Chromosome"/>
</dbReference>
<dbReference type="GO" id="GO:0005524">
    <property type="term" value="F:ATP binding"/>
    <property type="evidence" value="ECO:0007669"/>
    <property type="project" value="UniProtKB-UniRule"/>
</dbReference>
<dbReference type="GO" id="GO:0016879">
    <property type="term" value="F:ligase activity, forming carbon-nitrogen bonds"/>
    <property type="evidence" value="ECO:0007669"/>
    <property type="project" value="UniProtKB-UniRule"/>
</dbReference>
<dbReference type="GO" id="GO:0008270">
    <property type="term" value="F:zinc ion binding"/>
    <property type="evidence" value="ECO:0007669"/>
    <property type="project" value="UniProtKB-UniRule"/>
</dbReference>
<dbReference type="CDD" id="cd01995">
    <property type="entry name" value="QueC-like"/>
    <property type="match status" value="1"/>
</dbReference>
<dbReference type="Gene3D" id="3.40.50.620">
    <property type="entry name" value="HUPs"/>
    <property type="match status" value="1"/>
</dbReference>
<dbReference type="HAMAP" id="MF_01633">
    <property type="entry name" value="QueC"/>
    <property type="match status" value="1"/>
</dbReference>
<dbReference type="InterPro" id="IPR018317">
    <property type="entry name" value="QueC"/>
</dbReference>
<dbReference type="InterPro" id="IPR014729">
    <property type="entry name" value="Rossmann-like_a/b/a_fold"/>
</dbReference>
<dbReference type="NCBIfam" id="TIGR00364">
    <property type="entry name" value="7-cyano-7-deazaguanine synthase QueC"/>
    <property type="match status" value="1"/>
</dbReference>
<dbReference type="PANTHER" id="PTHR42914">
    <property type="entry name" value="7-CYANO-7-DEAZAGUANINE SYNTHASE"/>
    <property type="match status" value="1"/>
</dbReference>
<dbReference type="PANTHER" id="PTHR42914:SF1">
    <property type="entry name" value="7-CYANO-7-DEAZAGUANINE SYNTHASE"/>
    <property type="match status" value="1"/>
</dbReference>
<dbReference type="Pfam" id="PF06508">
    <property type="entry name" value="QueC"/>
    <property type="match status" value="1"/>
</dbReference>
<dbReference type="PIRSF" id="PIRSF006293">
    <property type="entry name" value="ExsB"/>
    <property type="match status" value="1"/>
</dbReference>
<dbReference type="SUPFAM" id="SSF52402">
    <property type="entry name" value="Adenine nucleotide alpha hydrolases-like"/>
    <property type="match status" value="1"/>
</dbReference>
<sequence length="241" mass="27003">MPKKAVVLLSGGLDSSTVLAYALNKGFEVYAISFDYGQRHLKEMKSSEAISKFYNVDRKIVKVDLRSIGKSALTDNIEVPSRDISTIEEEIPVTYVPARNTIFLSIAAAYAESLGTNEVFIGANAIDYSGYPDCRPEYFNAMENALSLGTKIGLKEKFHINVPLQYLSKADIVKLGVKLNVPYELTWSCYKGEEEACGECDSCQLRLKGFMEAGFADPLKYSKYPEFYSKNLVKLRPLKRR</sequence>
<keyword id="KW-0067">ATP-binding</keyword>
<keyword id="KW-0436">Ligase</keyword>
<keyword id="KW-0479">Metal-binding</keyword>
<keyword id="KW-0547">Nucleotide-binding</keyword>
<keyword id="KW-0862">Zinc</keyword>
<organism>
    <name type="scientific">Thermoplasma volcanium (strain ATCC 51530 / DSM 4299 / JCM 9571 / NBRC 15438 / GSS1)</name>
    <dbReference type="NCBI Taxonomy" id="273116"/>
    <lineage>
        <taxon>Archaea</taxon>
        <taxon>Methanobacteriati</taxon>
        <taxon>Thermoplasmatota</taxon>
        <taxon>Thermoplasmata</taxon>
        <taxon>Thermoplasmatales</taxon>
        <taxon>Thermoplasmataceae</taxon>
        <taxon>Thermoplasma</taxon>
    </lineage>
</organism>
<evidence type="ECO:0000255" key="1">
    <source>
        <dbReference type="HAMAP-Rule" id="MF_01633"/>
    </source>
</evidence>